<reference key="1">
    <citation type="submission" date="2006-06" db="EMBL/GenBank/DDBJ databases">
        <title>Complete sequence of chromosome of Mesorhizobium sp. BNC1.</title>
        <authorList>
            <consortium name="US DOE Joint Genome Institute"/>
            <person name="Copeland A."/>
            <person name="Lucas S."/>
            <person name="Lapidus A."/>
            <person name="Barry K."/>
            <person name="Detter J.C."/>
            <person name="Glavina del Rio T."/>
            <person name="Hammon N."/>
            <person name="Israni S."/>
            <person name="Dalin E."/>
            <person name="Tice H."/>
            <person name="Pitluck S."/>
            <person name="Chertkov O."/>
            <person name="Brettin T."/>
            <person name="Bruce D."/>
            <person name="Han C."/>
            <person name="Tapia R."/>
            <person name="Gilna P."/>
            <person name="Schmutz J."/>
            <person name="Larimer F."/>
            <person name="Land M."/>
            <person name="Hauser L."/>
            <person name="Kyrpides N."/>
            <person name="Mikhailova N."/>
            <person name="Richardson P."/>
        </authorList>
    </citation>
    <scope>NUCLEOTIDE SEQUENCE [LARGE SCALE GENOMIC DNA]</scope>
    <source>
        <strain>BNC1</strain>
    </source>
</reference>
<comment type="function">
    <text evidence="1">Transfers and isomerizes the ribose moiety from AdoMet to the 7-aminomethyl group of 7-deazaguanine (preQ1-tRNA) to give epoxyqueuosine (oQ-tRNA).</text>
</comment>
<comment type="catalytic activity">
    <reaction evidence="1">
        <text>7-aminomethyl-7-carbaguanosine(34) in tRNA + S-adenosyl-L-methionine = epoxyqueuosine(34) in tRNA + adenine + L-methionine + 2 H(+)</text>
        <dbReference type="Rhea" id="RHEA:32155"/>
        <dbReference type="Rhea" id="RHEA-COMP:10342"/>
        <dbReference type="Rhea" id="RHEA-COMP:18582"/>
        <dbReference type="ChEBI" id="CHEBI:15378"/>
        <dbReference type="ChEBI" id="CHEBI:16708"/>
        <dbReference type="ChEBI" id="CHEBI:57844"/>
        <dbReference type="ChEBI" id="CHEBI:59789"/>
        <dbReference type="ChEBI" id="CHEBI:82833"/>
        <dbReference type="ChEBI" id="CHEBI:194443"/>
        <dbReference type="EC" id="2.4.99.17"/>
    </reaction>
</comment>
<comment type="pathway">
    <text evidence="1">tRNA modification; tRNA-queuosine biosynthesis.</text>
</comment>
<comment type="subunit">
    <text evidence="1">Monomer.</text>
</comment>
<comment type="subcellular location">
    <subcellularLocation>
        <location evidence="1">Cytoplasm</location>
    </subcellularLocation>
</comment>
<comment type="similarity">
    <text evidence="1">Belongs to the QueA family.</text>
</comment>
<gene>
    <name evidence="1" type="primary">queA</name>
    <name type="ordered locus">Meso_1405</name>
</gene>
<keyword id="KW-0963">Cytoplasm</keyword>
<keyword id="KW-0671">Queuosine biosynthesis</keyword>
<keyword id="KW-0949">S-adenosyl-L-methionine</keyword>
<keyword id="KW-0808">Transferase</keyword>
<evidence type="ECO:0000255" key="1">
    <source>
        <dbReference type="HAMAP-Rule" id="MF_00113"/>
    </source>
</evidence>
<sequence>MRVDLFDFDLPEERIALRPASPRDSARMLVVRPGKPLEDCIVRDLPQFLRPGDALVFNDTKVIPARLSGIRRRGETVAQIEATLHMRAGPDRWKAFLKPAKRVAVGERIQFGHDGESCFLGSLDATVAEKGEGGEALLVFDFSGPVLDEAIAAAGHVPLPPYIASKRPDDERDRADYQTIYAREEGAVAAPTAGLHFTPDLFSALDTIGVERHFVTLHVGAGTFLPVKAEDTEAHRMHAEWGEVDGMTADALNAVRARGGCIIAVGTTSLRLLESAAEPSGLLKAWSGETDIFITPGYRFRAIDILMTNFHLPRSTLFMLVSAFSGLETMKSAYSHAIDQGYRFYSYGDSSLLFREDT</sequence>
<feature type="chain" id="PRO_1000015235" description="S-adenosylmethionine:tRNA ribosyltransferase-isomerase">
    <location>
        <begin position="1"/>
        <end position="358"/>
    </location>
</feature>
<proteinExistence type="inferred from homology"/>
<protein>
    <recommendedName>
        <fullName evidence="1">S-adenosylmethionine:tRNA ribosyltransferase-isomerase</fullName>
        <ecNumber evidence="1">2.4.99.17</ecNumber>
    </recommendedName>
    <alternativeName>
        <fullName evidence="1">Queuosine biosynthesis protein QueA</fullName>
    </alternativeName>
</protein>
<accession>Q11IH4</accession>
<dbReference type="EC" id="2.4.99.17" evidence="1"/>
<dbReference type="EMBL" id="CP000390">
    <property type="protein sequence ID" value="ABG62801.1"/>
    <property type="molecule type" value="Genomic_DNA"/>
</dbReference>
<dbReference type="SMR" id="Q11IH4"/>
<dbReference type="STRING" id="266779.Meso_1405"/>
<dbReference type="KEGG" id="mes:Meso_1405"/>
<dbReference type="eggNOG" id="COG0809">
    <property type="taxonomic scope" value="Bacteria"/>
</dbReference>
<dbReference type="HOGENOM" id="CLU_039110_1_1_5"/>
<dbReference type="OrthoDB" id="9805933at2"/>
<dbReference type="UniPathway" id="UPA00392"/>
<dbReference type="GO" id="GO:0005737">
    <property type="term" value="C:cytoplasm"/>
    <property type="evidence" value="ECO:0007669"/>
    <property type="project" value="UniProtKB-SubCell"/>
</dbReference>
<dbReference type="GO" id="GO:0051075">
    <property type="term" value="F:S-adenosylmethionine:tRNA ribosyltransferase-isomerase activity"/>
    <property type="evidence" value="ECO:0007669"/>
    <property type="project" value="UniProtKB-EC"/>
</dbReference>
<dbReference type="GO" id="GO:0008616">
    <property type="term" value="P:queuosine biosynthetic process"/>
    <property type="evidence" value="ECO:0007669"/>
    <property type="project" value="UniProtKB-UniRule"/>
</dbReference>
<dbReference type="GO" id="GO:0002099">
    <property type="term" value="P:tRNA wobble guanine modification"/>
    <property type="evidence" value="ECO:0007669"/>
    <property type="project" value="TreeGrafter"/>
</dbReference>
<dbReference type="Gene3D" id="2.40.10.240">
    <property type="entry name" value="QueA-like"/>
    <property type="match status" value="1"/>
</dbReference>
<dbReference type="Gene3D" id="3.40.1780.10">
    <property type="entry name" value="QueA-like"/>
    <property type="match status" value="1"/>
</dbReference>
<dbReference type="HAMAP" id="MF_00113">
    <property type="entry name" value="QueA"/>
    <property type="match status" value="1"/>
</dbReference>
<dbReference type="InterPro" id="IPR003699">
    <property type="entry name" value="QueA"/>
</dbReference>
<dbReference type="InterPro" id="IPR042118">
    <property type="entry name" value="QueA_dom1"/>
</dbReference>
<dbReference type="InterPro" id="IPR042119">
    <property type="entry name" value="QueA_dom2"/>
</dbReference>
<dbReference type="InterPro" id="IPR036100">
    <property type="entry name" value="QueA_sf"/>
</dbReference>
<dbReference type="NCBIfam" id="NF001140">
    <property type="entry name" value="PRK00147.1"/>
    <property type="match status" value="1"/>
</dbReference>
<dbReference type="NCBIfam" id="TIGR00113">
    <property type="entry name" value="queA"/>
    <property type="match status" value="1"/>
</dbReference>
<dbReference type="PANTHER" id="PTHR30307">
    <property type="entry name" value="S-ADENOSYLMETHIONINE:TRNA RIBOSYLTRANSFERASE-ISOMERASE"/>
    <property type="match status" value="1"/>
</dbReference>
<dbReference type="PANTHER" id="PTHR30307:SF0">
    <property type="entry name" value="S-ADENOSYLMETHIONINE:TRNA RIBOSYLTRANSFERASE-ISOMERASE"/>
    <property type="match status" value="1"/>
</dbReference>
<dbReference type="Pfam" id="PF02547">
    <property type="entry name" value="Queuosine_synth"/>
    <property type="match status" value="1"/>
</dbReference>
<dbReference type="SUPFAM" id="SSF111337">
    <property type="entry name" value="QueA-like"/>
    <property type="match status" value="1"/>
</dbReference>
<name>QUEA_CHESB</name>
<organism>
    <name type="scientific">Chelativorans sp. (strain BNC1)</name>
    <dbReference type="NCBI Taxonomy" id="266779"/>
    <lineage>
        <taxon>Bacteria</taxon>
        <taxon>Pseudomonadati</taxon>
        <taxon>Pseudomonadota</taxon>
        <taxon>Alphaproteobacteria</taxon>
        <taxon>Hyphomicrobiales</taxon>
        <taxon>Phyllobacteriaceae</taxon>
        <taxon>Chelativorans</taxon>
    </lineage>
</organism>